<keyword id="KW-0051">Antiviral defense</keyword>
<keyword id="KW-0202">Cytokine</keyword>
<keyword id="KW-1015">Disulfide bond</keyword>
<keyword id="KW-0325">Glycoprotein</keyword>
<keyword id="KW-0597">Phosphoprotein</keyword>
<keyword id="KW-1185">Reference proteome</keyword>
<keyword id="KW-0964">Secreted</keyword>
<keyword id="KW-0732">Signal</keyword>
<feature type="signal peptide" evidence="4">
    <location>
        <begin position="1"/>
        <end position="21"/>
    </location>
</feature>
<feature type="chain" id="PRO_0000016402" description="Interferon beta">
    <location>
        <begin position="22"/>
        <end position="187"/>
    </location>
</feature>
<feature type="modified residue" description="Phosphotyrosine" evidence="3">
    <location>
        <position position="24"/>
    </location>
</feature>
<feature type="glycosylation site" description="N-linked (GlcNAc...) asparagine" evidence="4">
    <location>
        <position position="101"/>
    </location>
</feature>
<feature type="disulfide bond" evidence="1">
    <location>
        <begin position="52"/>
        <end position="162"/>
    </location>
</feature>
<accession>O77812</accession>
<sequence>MTNKCLLQIALLLCFSTTALSMSYNLLGFLQRSSSFQCQKLLWQLNGRLEYCLKDRMNFDIPEEIKQPQQFQKEDAALTIYEMLQNIYAIFRQDLSSTGWNETIVENLLANVYHQIDHLKTILEEKLEKEDFTRGKFVSSLHLKRYYGRILHYLKAKEYSHCAWTIVRVEILRNFFFINKLTGYLRN</sequence>
<proteinExistence type="inferred from homology"/>
<organism>
    <name type="scientific">Macaca fascicularis</name>
    <name type="common">Crab-eating macaque</name>
    <name type="synonym">Cynomolgus monkey</name>
    <dbReference type="NCBI Taxonomy" id="9541"/>
    <lineage>
        <taxon>Eukaryota</taxon>
        <taxon>Metazoa</taxon>
        <taxon>Chordata</taxon>
        <taxon>Craniata</taxon>
        <taxon>Vertebrata</taxon>
        <taxon>Euteleostomi</taxon>
        <taxon>Mammalia</taxon>
        <taxon>Eutheria</taxon>
        <taxon>Euarchontoglires</taxon>
        <taxon>Primates</taxon>
        <taxon>Haplorrhini</taxon>
        <taxon>Catarrhini</taxon>
        <taxon>Cercopithecidae</taxon>
        <taxon>Cercopithecinae</taxon>
        <taxon>Macaca</taxon>
    </lineage>
</organism>
<gene>
    <name type="primary">IFNB1</name>
    <name type="synonym">IFNB</name>
</gene>
<dbReference type="EMBL" id="AJ011909">
    <property type="protein sequence ID" value="CAA09862.1"/>
    <property type="molecule type" value="Genomic_DNA"/>
</dbReference>
<dbReference type="SMR" id="O77812"/>
<dbReference type="STRING" id="9541.ENSMFAP00000013528"/>
<dbReference type="GlyCosmos" id="O77812">
    <property type="glycosylation" value="1 site, No reported glycans"/>
</dbReference>
<dbReference type="eggNOG" id="ENOG502SQGR">
    <property type="taxonomic scope" value="Eukaryota"/>
</dbReference>
<dbReference type="Proteomes" id="UP000233100">
    <property type="component" value="Unplaced"/>
</dbReference>
<dbReference type="GO" id="GO:0005615">
    <property type="term" value="C:extracellular space"/>
    <property type="evidence" value="ECO:0007669"/>
    <property type="project" value="UniProtKB-KW"/>
</dbReference>
<dbReference type="GO" id="GO:0005125">
    <property type="term" value="F:cytokine activity"/>
    <property type="evidence" value="ECO:0007669"/>
    <property type="project" value="UniProtKB-KW"/>
</dbReference>
<dbReference type="GO" id="GO:0005126">
    <property type="term" value="F:cytokine receptor binding"/>
    <property type="evidence" value="ECO:0007669"/>
    <property type="project" value="InterPro"/>
</dbReference>
<dbReference type="GO" id="GO:0051607">
    <property type="term" value="P:defense response to virus"/>
    <property type="evidence" value="ECO:0000250"/>
    <property type="project" value="UniProtKB"/>
</dbReference>
<dbReference type="GO" id="GO:0006955">
    <property type="term" value="P:immune response"/>
    <property type="evidence" value="ECO:0007669"/>
    <property type="project" value="UniProtKB-ARBA"/>
</dbReference>
<dbReference type="GO" id="GO:0140123">
    <property type="term" value="P:negative regulation of Lewy body formation"/>
    <property type="evidence" value="ECO:0000250"/>
    <property type="project" value="UniProtKB"/>
</dbReference>
<dbReference type="GO" id="GO:0070050">
    <property type="term" value="P:neuron cellular homeostasis"/>
    <property type="evidence" value="ECO:0000250"/>
    <property type="project" value="UniProtKB"/>
</dbReference>
<dbReference type="GO" id="GO:0010508">
    <property type="term" value="P:positive regulation of autophagy"/>
    <property type="evidence" value="ECO:0000250"/>
    <property type="project" value="UniProtKB"/>
</dbReference>
<dbReference type="CDD" id="cd00095">
    <property type="entry name" value="IFab"/>
    <property type="match status" value="1"/>
</dbReference>
<dbReference type="FunFam" id="1.20.1250.10:FF:000026">
    <property type="entry name" value="Interferon beta"/>
    <property type="match status" value="1"/>
</dbReference>
<dbReference type="Gene3D" id="1.20.1250.10">
    <property type="match status" value="1"/>
</dbReference>
<dbReference type="InterPro" id="IPR009079">
    <property type="entry name" value="4_helix_cytokine-like_core"/>
</dbReference>
<dbReference type="InterPro" id="IPR000471">
    <property type="entry name" value="Interferon_alpha/beta/delta"/>
</dbReference>
<dbReference type="PANTHER" id="PTHR11691:SF73">
    <property type="entry name" value="INTERFERON BETA"/>
    <property type="match status" value="1"/>
</dbReference>
<dbReference type="PANTHER" id="PTHR11691">
    <property type="entry name" value="TYPE I INTERFERON"/>
    <property type="match status" value="1"/>
</dbReference>
<dbReference type="Pfam" id="PF00143">
    <property type="entry name" value="Interferon"/>
    <property type="match status" value="1"/>
</dbReference>
<dbReference type="PRINTS" id="PR00266">
    <property type="entry name" value="INTERFERONAB"/>
</dbReference>
<dbReference type="SMART" id="SM00076">
    <property type="entry name" value="IFabd"/>
    <property type="match status" value="1"/>
</dbReference>
<dbReference type="SUPFAM" id="SSF47266">
    <property type="entry name" value="4-helical cytokines"/>
    <property type="match status" value="1"/>
</dbReference>
<dbReference type="PROSITE" id="PS00252">
    <property type="entry name" value="INTERFERON_A_B_D"/>
    <property type="match status" value="1"/>
</dbReference>
<comment type="function">
    <text evidence="1 2">Type I interferon cytokine that plays a key role in the innate immune response to infection, developing tumors and other inflammatory stimuli. Signals via binding to high-affinity (IFNAR2) and low-affinity (IFNAR1) heterodimeric receptor, activating the canonical Jak-STAT signaling pathway resulting in transcriptional activation or repression of interferon-regulated genes that encode the effectors of the interferon response, such as antiviral proteins, regulators of cell proliferation and differentiation, and immunoregulatory proteins (By similarity). Signals mostly via binding to a IFNAR1-IFNAR2 heterodimeric receptor, but can also function with IFNAR1 alone and independently of Jak-STAT pathways. Elicits a wide variety of responses, including antiviral and antibacterial activities, and can regulate the development of B-cells, myelopoiesis and lipopolysaccharide (LPS)-inducible production of tumor necrosis factor. Plays a role in neuronal homeostasis by regulating dopamine turnover and protecting dopaminergic neurons: acts by promoting neuronal autophagy and alpha-synuclein clearance, thereby preventing dopaminergic neuron loss. IFNB1 is more potent than interferon-alpha (IFN-alpha) in inducing the apoptotic and antiproliferative pathways required for control of tumor cell growth (By similarity).</text>
</comment>
<comment type="subunit">
    <text evidence="1">Monomer.</text>
</comment>
<comment type="subcellular location">
    <subcellularLocation>
        <location evidence="1">Secreted</location>
    </subcellularLocation>
</comment>
<comment type="similarity">
    <text evidence="5">Belongs to the alpha/beta interferon family.</text>
</comment>
<evidence type="ECO:0000250" key="1">
    <source>
        <dbReference type="UniProtKB" id="P01574"/>
    </source>
</evidence>
<evidence type="ECO:0000250" key="2">
    <source>
        <dbReference type="UniProtKB" id="P01575"/>
    </source>
</evidence>
<evidence type="ECO:0000250" key="3">
    <source>
        <dbReference type="UniProtKB" id="P70499"/>
    </source>
</evidence>
<evidence type="ECO:0000255" key="4"/>
<evidence type="ECO:0000305" key="5"/>
<reference key="1">
    <citation type="journal article" date="1999" name="Hum. Gene Ther.">
        <title>Macaque lymphocytes transduced by a constitutively expressed interferon beta gene display an enhanced resistance to SIVmac251 infection.</title>
        <authorList>
            <person name="Matheux F."/>
            <person name="Le Grand R."/>
            <person name="Rousseau V."/>
            <person name="De Maeyer E."/>
            <person name="Dormont D."/>
            <person name="Lauret E."/>
        </authorList>
    </citation>
    <scope>NUCLEOTIDE SEQUENCE [GENOMIC DNA]</scope>
</reference>
<name>IFNB_MACFA</name>
<protein>
    <recommendedName>
        <fullName>Interferon beta</fullName>
        <shortName>IFN-beta</shortName>
    </recommendedName>
</protein>